<evidence type="ECO:0000255" key="1">
    <source>
        <dbReference type="HAMAP-Rule" id="MF_01326"/>
    </source>
</evidence>
<evidence type="ECO:0000256" key="2">
    <source>
        <dbReference type="SAM" id="MobiDB-lite"/>
    </source>
</evidence>
<evidence type="ECO:0000305" key="3"/>
<comment type="function">
    <text evidence="1">One of two assembly initiator proteins, it binds directly to the 5'-end of the 23S rRNA, where it nucleates assembly of the 50S subunit.</text>
</comment>
<comment type="function">
    <text evidence="1">One of the proteins that surrounds the polypeptide exit tunnel on the outside of the subunit.</text>
</comment>
<comment type="subunit">
    <text evidence="1">Part of the 50S ribosomal subunit.</text>
</comment>
<comment type="similarity">
    <text evidence="1">Belongs to the universal ribosomal protein uL24 family.</text>
</comment>
<sequence>MKSEIKKNDMVKVIAGDDKGKVAKVLAVLPKTSQVVVEGCKVVKKAIKPTDDNPKGGFIKKEKPMHISNVKKA</sequence>
<proteinExistence type="inferred from homology"/>
<name>RL24_HELPJ</name>
<dbReference type="EMBL" id="AE001439">
    <property type="protein sequence ID" value="AAD06794.1"/>
    <property type="molecule type" value="Genomic_DNA"/>
</dbReference>
<dbReference type="PIR" id="D71834">
    <property type="entry name" value="D71834"/>
</dbReference>
<dbReference type="RefSeq" id="WP_000834240.1">
    <property type="nucleotide sequence ID" value="NZ_CP011330.1"/>
</dbReference>
<dbReference type="SMR" id="Q9ZJS3"/>
<dbReference type="KEGG" id="hpj:jhp_1228"/>
<dbReference type="PATRIC" id="fig|85963.30.peg.1343"/>
<dbReference type="eggNOG" id="COG0198">
    <property type="taxonomic scope" value="Bacteria"/>
</dbReference>
<dbReference type="Proteomes" id="UP000000804">
    <property type="component" value="Chromosome"/>
</dbReference>
<dbReference type="GO" id="GO:1990904">
    <property type="term" value="C:ribonucleoprotein complex"/>
    <property type="evidence" value="ECO:0007669"/>
    <property type="project" value="UniProtKB-KW"/>
</dbReference>
<dbReference type="GO" id="GO:0005840">
    <property type="term" value="C:ribosome"/>
    <property type="evidence" value="ECO:0007669"/>
    <property type="project" value="UniProtKB-KW"/>
</dbReference>
<dbReference type="GO" id="GO:0019843">
    <property type="term" value="F:rRNA binding"/>
    <property type="evidence" value="ECO:0007669"/>
    <property type="project" value="UniProtKB-UniRule"/>
</dbReference>
<dbReference type="GO" id="GO:0003735">
    <property type="term" value="F:structural constituent of ribosome"/>
    <property type="evidence" value="ECO:0007669"/>
    <property type="project" value="InterPro"/>
</dbReference>
<dbReference type="GO" id="GO:0006412">
    <property type="term" value="P:translation"/>
    <property type="evidence" value="ECO:0007669"/>
    <property type="project" value="UniProtKB-UniRule"/>
</dbReference>
<dbReference type="CDD" id="cd06089">
    <property type="entry name" value="KOW_RPL26"/>
    <property type="match status" value="1"/>
</dbReference>
<dbReference type="FunFam" id="2.30.30.30:FF:000023">
    <property type="entry name" value="50S ribosomal protein L24"/>
    <property type="match status" value="1"/>
</dbReference>
<dbReference type="Gene3D" id="2.30.30.30">
    <property type="match status" value="1"/>
</dbReference>
<dbReference type="HAMAP" id="MF_01326_B">
    <property type="entry name" value="Ribosomal_uL24_B"/>
    <property type="match status" value="1"/>
</dbReference>
<dbReference type="InterPro" id="IPR005824">
    <property type="entry name" value="KOW"/>
</dbReference>
<dbReference type="InterPro" id="IPR014722">
    <property type="entry name" value="Rib_uL2_dom2"/>
</dbReference>
<dbReference type="InterPro" id="IPR003256">
    <property type="entry name" value="Ribosomal_uL24"/>
</dbReference>
<dbReference type="InterPro" id="IPR005825">
    <property type="entry name" value="Ribosomal_uL24_CS"/>
</dbReference>
<dbReference type="InterPro" id="IPR041988">
    <property type="entry name" value="Ribosomal_uL24_KOW"/>
</dbReference>
<dbReference type="InterPro" id="IPR008991">
    <property type="entry name" value="Translation_prot_SH3-like_sf"/>
</dbReference>
<dbReference type="NCBIfam" id="TIGR01079">
    <property type="entry name" value="rplX_bact"/>
    <property type="match status" value="1"/>
</dbReference>
<dbReference type="PANTHER" id="PTHR12903">
    <property type="entry name" value="MITOCHONDRIAL RIBOSOMAL PROTEIN L24"/>
    <property type="match status" value="1"/>
</dbReference>
<dbReference type="Pfam" id="PF00467">
    <property type="entry name" value="KOW"/>
    <property type="match status" value="1"/>
</dbReference>
<dbReference type="Pfam" id="PF17136">
    <property type="entry name" value="ribosomal_L24"/>
    <property type="match status" value="1"/>
</dbReference>
<dbReference type="SMART" id="SM00739">
    <property type="entry name" value="KOW"/>
    <property type="match status" value="1"/>
</dbReference>
<dbReference type="SUPFAM" id="SSF50104">
    <property type="entry name" value="Translation proteins SH3-like domain"/>
    <property type="match status" value="1"/>
</dbReference>
<dbReference type="PROSITE" id="PS01108">
    <property type="entry name" value="RIBOSOMAL_L24"/>
    <property type="match status" value="1"/>
</dbReference>
<accession>Q9ZJS3</accession>
<feature type="chain" id="PRO_0000130665" description="Large ribosomal subunit protein uL24">
    <location>
        <begin position="1"/>
        <end position="73"/>
    </location>
</feature>
<feature type="region of interest" description="Disordered" evidence="2">
    <location>
        <begin position="53"/>
        <end position="73"/>
    </location>
</feature>
<feature type="compositionally biased region" description="Basic and acidic residues" evidence="2">
    <location>
        <begin position="53"/>
        <end position="65"/>
    </location>
</feature>
<reference key="1">
    <citation type="journal article" date="1999" name="Nature">
        <title>Genomic sequence comparison of two unrelated isolates of the human gastric pathogen Helicobacter pylori.</title>
        <authorList>
            <person name="Alm R.A."/>
            <person name="Ling L.-S.L."/>
            <person name="Moir D.T."/>
            <person name="King B.L."/>
            <person name="Brown E.D."/>
            <person name="Doig P.C."/>
            <person name="Smith D.R."/>
            <person name="Noonan B."/>
            <person name="Guild B.C."/>
            <person name="deJonge B.L."/>
            <person name="Carmel G."/>
            <person name="Tummino P.J."/>
            <person name="Caruso A."/>
            <person name="Uria-Nickelsen M."/>
            <person name="Mills D.M."/>
            <person name="Ives C."/>
            <person name="Gibson R."/>
            <person name="Merberg D."/>
            <person name="Mills S.D."/>
            <person name="Jiang Q."/>
            <person name="Taylor D.E."/>
            <person name="Vovis G.F."/>
            <person name="Trust T.J."/>
        </authorList>
    </citation>
    <scope>NUCLEOTIDE SEQUENCE [LARGE SCALE GENOMIC DNA]</scope>
    <source>
        <strain>J99 / ATCC 700824</strain>
    </source>
</reference>
<gene>
    <name evidence="1" type="primary">rplX</name>
    <name type="ordered locus">jhp_1228</name>
</gene>
<protein>
    <recommendedName>
        <fullName evidence="1">Large ribosomal subunit protein uL24</fullName>
    </recommendedName>
    <alternativeName>
        <fullName evidence="3">50S ribosomal protein L24</fullName>
    </alternativeName>
</protein>
<organism>
    <name type="scientific">Helicobacter pylori (strain J99 / ATCC 700824)</name>
    <name type="common">Campylobacter pylori J99</name>
    <dbReference type="NCBI Taxonomy" id="85963"/>
    <lineage>
        <taxon>Bacteria</taxon>
        <taxon>Pseudomonadati</taxon>
        <taxon>Campylobacterota</taxon>
        <taxon>Epsilonproteobacteria</taxon>
        <taxon>Campylobacterales</taxon>
        <taxon>Helicobacteraceae</taxon>
        <taxon>Helicobacter</taxon>
    </lineage>
</organism>
<keyword id="KW-0687">Ribonucleoprotein</keyword>
<keyword id="KW-0689">Ribosomal protein</keyword>
<keyword id="KW-0694">RNA-binding</keyword>
<keyword id="KW-0699">rRNA-binding</keyword>